<protein>
    <recommendedName>
        <fullName>Protein SPATA31F1</fullName>
    </recommendedName>
    <alternativeName>
        <fullName>Protein FAM205A</fullName>
    </alternativeName>
</protein>
<reference key="1">
    <citation type="journal article" date="2004" name="Nat. Genet.">
        <title>Complete sequencing and characterization of 21,243 full-length human cDNAs.</title>
        <authorList>
            <person name="Ota T."/>
            <person name="Suzuki Y."/>
            <person name="Nishikawa T."/>
            <person name="Otsuki T."/>
            <person name="Sugiyama T."/>
            <person name="Irie R."/>
            <person name="Wakamatsu A."/>
            <person name="Hayashi K."/>
            <person name="Sato H."/>
            <person name="Nagai K."/>
            <person name="Kimura K."/>
            <person name="Makita H."/>
            <person name="Sekine M."/>
            <person name="Obayashi M."/>
            <person name="Nishi T."/>
            <person name="Shibahara T."/>
            <person name="Tanaka T."/>
            <person name="Ishii S."/>
            <person name="Yamamoto J."/>
            <person name="Saito K."/>
            <person name="Kawai Y."/>
            <person name="Isono Y."/>
            <person name="Nakamura Y."/>
            <person name="Nagahari K."/>
            <person name="Murakami K."/>
            <person name="Yasuda T."/>
            <person name="Iwayanagi T."/>
            <person name="Wagatsuma M."/>
            <person name="Shiratori A."/>
            <person name="Sudo H."/>
            <person name="Hosoiri T."/>
            <person name="Kaku Y."/>
            <person name="Kodaira H."/>
            <person name="Kondo H."/>
            <person name="Sugawara M."/>
            <person name="Takahashi M."/>
            <person name="Kanda K."/>
            <person name="Yokoi T."/>
            <person name="Furuya T."/>
            <person name="Kikkawa E."/>
            <person name="Omura Y."/>
            <person name="Abe K."/>
            <person name="Kamihara K."/>
            <person name="Katsuta N."/>
            <person name="Sato K."/>
            <person name="Tanikawa M."/>
            <person name="Yamazaki M."/>
            <person name="Ninomiya K."/>
            <person name="Ishibashi T."/>
            <person name="Yamashita H."/>
            <person name="Murakawa K."/>
            <person name="Fujimori K."/>
            <person name="Tanai H."/>
            <person name="Kimata M."/>
            <person name="Watanabe M."/>
            <person name="Hiraoka S."/>
            <person name="Chiba Y."/>
            <person name="Ishida S."/>
            <person name="Ono Y."/>
            <person name="Takiguchi S."/>
            <person name="Watanabe S."/>
            <person name="Yosida M."/>
            <person name="Hotuta T."/>
            <person name="Kusano J."/>
            <person name="Kanehori K."/>
            <person name="Takahashi-Fujii A."/>
            <person name="Hara H."/>
            <person name="Tanase T.-O."/>
            <person name="Nomura Y."/>
            <person name="Togiya S."/>
            <person name="Komai F."/>
            <person name="Hara R."/>
            <person name="Takeuchi K."/>
            <person name="Arita M."/>
            <person name="Imose N."/>
            <person name="Musashino K."/>
            <person name="Yuuki H."/>
            <person name="Oshima A."/>
            <person name="Sasaki N."/>
            <person name="Aotsuka S."/>
            <person name="Yoshikawa Y."/>
            <person name="Matsunawa H."/>
            <person name="Ichihara T."/>
            <person name="Shiohata N."/>
            <person name="Sano S."/>
            <person name="Moriya S."/>
            <person name="Momiyama H."/>
            <person name="Satoh N."/>
            <person name="Takami S."/>
            <person name="Terashima Y."/>
            <person name="Suzuki O."/>
            <person name="Nakagawa S."/>
            <person name="Senoh A."/>
            <person name="Mizoguchi H."/>
            <person name="Goto Y."/>
            <person name="Shimizu F."/>
            <person name="Wakebe H."/>
            <person name="Hishigaki H."/>
            <person name="Watanabe T."/>
            <person name="Sugiyama A."/>
            <person name="Takemoto M."/>
            <person name="Kawakami B."/>
            <person name="Yamazaki M."/>
            <person name="Watanabe K."/>
            <person name="Kumagai A."/>
            <person name="Itakura S."/>
            <person name="Fukuzumi Y."/>
            <person name="Fujimori Y."/>
            <person name="Komiyama M."/>
            <person name="Tashiro H."/>
            <person name="Tanigami A."/>
            <person name="Fujiwara T."/>
            <person name="Ono T."/>
            <person name="Yamada K."/>
            <person name="Fujii Y."/>
            <person name="Ozaki K."/>
            <person name="Hirao M."/>
            <person name="Ohmori Y."/>
            <person name="Kawabata A."/>
            <person name="Hikiji T."/>
            <person name="Kobatake N."/>
            <person name="Inagaki H."/>
            <person name="Ikema Y."/>
            <person name="Okamoto S."/>
            <person name="Okitani R."/>
            <person name="Kawakami T."/>
            <person name="Noguchi S."/>
            <person name="Itoh T."/>
            <person name="Shigeta K."/>
            <person name="Senba T."/>
            <person name="Matsumura K."/>
            <person name="Nakajima Y."/>
            <person name="Mizuno T."/>
            <person name="Morinaga M."/>
            <person name="Sasaki M."/>
            <person name="Togashi T."/>
            <person name="Oyama M."/>
            <person name="Hata H."/>
            <person name="Watanabe M."/>
            <person name="Komatsu T."/>
            <person name="Mizushima-Sugano J."/>
            <person name="Satoh T."/>
            <person name="Shirai Y."/>
            <person name="Takahashi Y."/>
            <person name="Nakagawa K."/>
            <person name="Okumura K."/>
            <person name="Nagase T."/>
            <person name="Nomura N."/>
            <person name="Kikuchi H."/>
            <person name="Masuho Y."/>
            <person name="Yamashita R."/>
            <person name="Nakai K."/>
            <person name="Yada T."/>
            <person name="Nakamura Y."/>
            <person name="Ohara O."/>
            <person name="Isogai T."/>
            <person name="Sugano S."/>
        </authorList>
    </citation>
    <scope>NUCLEOTIDE SEQUENCE [LARGE SCALE MRNA]</scope>
    <source>
        <tissue>Testis</tissue>
    </source>
</reference>
<reference key="2">
    <citation type="journal article" date="2004" name="Nature">
        <title>DNA sequence and analysis of human chromosome 9.</title>
        <authorList>
            <person name="Humphray S.J."/>
            <person name="Oliver K."/>
            <person name="Hunt A.R."/>
            <person name="Plumb R.W."/>
            <person name="Loveland J.E."/>
            <person name="Howe K.L."/>
            <person name="Andrews T.D."/>
            <person name="Searle S."/>
            <person name="Hunt S.E."/>
            <person name="Scott C.E."/>
            <person name="Jones M.C."/>
            <person name="Ainscough R."/>
            <person name="Almeida J.P."/>
            <person name="Ambrose K.D."/>
            <person name="Ashwell R.I.S."/>
            <person name="Babbage A.K."/>
            <person name="Babbage S."/>
            <person name="Bagguley C.L."/>
            <person name="Bailey J."/>
            <person name="Banerjee R."/>
            <person name="Barker D.J."/>
            <person name="Barlow K.F."/>
            <person name="Bates K."/>
            <person name="Beasley H."/>
            <person name="Beasley O."/>
            <person name="Bird C.P."/>
            <person name="Bray-Allen S."/>
            <person name="Brown A.J."/>
            <person name="Brown J.Y."/>
            <person name="Burford D."/>
            <person name="Burrill W."/>
            <person name="Burton J."/>
            <person name="Carder C."/>
            <person name="Carter N.P."/>
            <person name="Chapman J.C."/>
            <person name="Chen Y."/>
            <person name="Clarke G."/>
            <person name="Clark S.Y."/>
            <person name="Clee C.M."/>
            <person name="Clegg S."/>
            <person name="Collier R.E."/>
            <person name="Corby N."/>
            <person name="Crosier M."/>
            <person name="Cummings A.T."/>
            <person name="Davies J."/>
            <person name="Dhami P."/>
            <person name="Dunn M."/>
            <person name="Dutta I."/>
            <person name="Dyer L.W."/>
            <person name="Earthrowl M.E."/>
            <person name="Faulkner L."/>
            <person name="Fleming C.J."/>
            <person name="Frankish A."/>
            <person name="Frankland J.A."/>
            <person name="French L."/>
            <person name="Fricker D.G."/>
            <person name="Garner P."/>
            <person name="Garnett J."/>
            <person name="Ghori J."/>
            <person name="Gilbert J.G.R."/>
            <person name="Glison C."/>
            <person name="Grafham D.V."/>
            <person name="Gribble S."/>
            <person name="Griffiths C."/>
            <person name="Griffiths-Jones S."/>
            <person name="Grocock R."/>
            <person name="Guy J."/>
            <person name="Hall R.E."/>
            <person name="Hammond S."/>
            <person name="Harley J.L."/>
            <person name="Harrison E.S.I."/>
            <person name="Hart E.A."/>
            <person name="Heath P.D."/>
            <person name="Henderson C.D."/>
            <person name="Hopkins B.L."/>
            <person name="Howard P.J."/>
            <person name="Howden P.J."/>
            <person name="Huckle E."/>
            <person name="Johnson C."/>
            <person name="Johnson D."/>
            <person name="Joy A.A."/>
            <person name="Kay M."/>
            <person name="Keenan S."/>
            <person name="Kershaw J.K."/>
            <person name="Kimberley A.M."/>
            <person name="King A."/>
            <person name="Knights A."/>
            <person name="Laird G.K."/>
            <person name="Langford C."/>
            <person name="Lawlor S."/>
            <person name="Leongamornlert D.A."/>
            <person name="Leversha M."/>
            <person name="Lloyd C."/>
            <person name="Lloyd D.M."/>
            <person name="Lovell J."/>
            <person name="Martin S."/>
            <person name="Mashreghi-Mohammadi M."/>
            <person name="Matthews L."/>
            <person name="McLaren S."/>
            <person name="McLay K.E."/>
            <person name="McMurray A."/>
            <person name="Milne S."/>
            <person name="Nickerson T."/>
            <person name="Nisbett J."/>
            <person name="Nordsiek G."/>
            <person name="Pearce A.V."/>
            <person name="Peck A.I."/>
            <person name="Porter K.M."/>
            <person name="Pandian R."/>
            <person name="Pelan S."/>
            <person name="Phillimore B."/>
            <person name="Povey S."/>
            <person name="Ramsey Y."/>
            <person name="Rand V."/>
            <person name="Scharfe M."/>
            <person name="Sehra H.K."/>
            <person name="Shownkeen R."/>
            <person name="Sims S.K."/>
            <person name="Skuce C.D."/>
            <person name="Smith M."/>
            <person name="Steward C.A."/>
            <person name="Swarbreck D."/>
            <person name="Sycamore N."/>
            <person name="Tester J."/>
            <person name="Thorpe A."/>
            <person name="Tracey A."/>
            <person name="Tromans A."/>
            <person name="Thomas D.W."/>
            <person name="Wall M."/>
            <person name="Wallis J.M."/>
            <person name="West A.P."/>
            <person name="Whitehead S.L."/>
            <person name="Willey D.L."/>
            <person name="Williams S.A."/>
            <person name="Wilming L."/>
            <person name="Wray P.W."/>
            <person name="Young L."/>
            <person name="Ashurst J.L."/>
            <person name="Coulson A."/>
            <person name="Blocker H."/>
            <person name="Durbin R.M."/>
            <person name="Sulston J.E."/>
            <person name="Hubbard T."/>
            <person name="Jackson M.J."/>
            <person name="Bentley D.R."/>
            <person name="Beck S."/>
            <person name="Rogers J."/>
            <person name="Dunham I."/>
        </authorList>
    </citation>
    <scope>NUCLEOTIDE SEQUENCE [LARGE SCALE GENOMIC DNA]</scope>
</reference>
<accession>Q6ZU69</accession>
<accession>A8MVW7</accession>
<comment type="subcellular location">
    <subcellularLocation>
        <location evidence="3">Membrane</location>
        <topology evidence="3">Single-pass membrane protein</topology>
    </subcellularLocation>
</comment>
<comment type="similarity">
    <text evidence="3">Belongs to the SPATA31 family.</text>
</comment>
<comment type="sequence caution" evidence="3">
    <conflict type="erroneous initiation">
        <sequence resource="EMBL-CDS" id="BAC86357"/>
    </conflict>
</comment>
<dbReference type="EMBL" id="AK125949">
    <property type="protein sequence ID" value="BAC86357.1"/>
    <property type="status" value="ALT_INIT"/>
    <property type="molecule type" value="mRNA"/>
</dbReference>
<dbReference type="EMBL" id="DC402575">
    <property type="status" value="NOT_ANNOTATED_CDS"/>
    <property type="molecule type" value="mRNA"/>
</dbReference>
<dbReference type="EMBL" id="DC404169">
    <property type="status" value="NOT_ANNOTATED_CDS"/>
    <property type="molecule type" value="mRNA"/>
</dbReference>
<dbReference type="EMBL" id="AL162231">
    <property type="status" value="NOT_ANNOTATED_CDS"/>
    <property type="molecule type" value="Genomic_DNA"/>
</dbReference>
<dbReference type="CCDS" id="CCDS55305.1"/>
<dbReference type="RefSeq" id="NP_001135389.1">
    <property type="nucleotide sequence ID" value="NM_001141917.2"/>
</dbReference>
<dbReference type="SMR" id="Q6ZU69"/>
<dbReference type="BioGRID" id="129253">
    <property type="interactions" value="1"/>
</dbReference>
<dbReference type="FunCoup" id="Q6ZU69">
    <property type="interactions" value="21"/>
</dbReference>
<dbReference type="IntAct" id="Q6ZU69">
    <property type="interactions" value="2"/>
</dbReference>
<dbReference type="STRING" id="9606.ENSP00000417711"/>
<dbReference type="GlyGen" id="Q6ZU69">
    <property type="glycosylation" value="1 site, 1 O-linked glycan (1 site)"/>
</dbReference>
<dbReference type="iPTMnet" id="Q6ZU69"/>
<dbReference type="PhosphoSitePlus" id="Q6ZU69"/>
<dbReference type="BioMuta" id="FAM205A"/>
<dbReference type="DMDM" id="206729931"/>
<dbReference type="jPOST" id="Q6ZU69"/>
<dbReference type="MassIVE" id="Q6ZU69"/>
<dbReference type="PaxDb" id="9606-ENSP00000417711"/>
<dbReference type="PeptideAtlas" id="Q6ZU69"/>
<dbReference type="ProteomicsDB" id="68320"/>
<dbReference type="Antibodypedia" id="20893">
    <property type="antibodies" value="10 antibodies from 7 providers"/>
</dbReference>
<dbReference type="DNASU" id="259308"/>
<dbReference type="Ensembl" id="ENST00000378788.4">
    <property type="protein sequence ID" value="ENSP00000417711.1"/>
    <property type="gene ID" value="ENSG00000205108.6"/>
</dbReference>
<dbReference type="GeneID" id="259308"/>
<dbReference type="KEGG" id="hsa:259308"/>
<dbReference type="MANE-Select" id="ENST00000378788.4">
    <property type="protein sequence ID" value="ENSP00000417711.1"/>
    <property type="RefSeq nucleotide sequence ID" value="NM_001141917.2"/>
    <property type="RefSeq protein sequence ID" value="NP_001135389.1"/>
</dbReference>
<dbReference type="UCSC" id="uc011lor.3">
    <property type="organism name" value="human"/>
</dbReference>
<dbReference type="AGR" id="HGNC:41911"/>
<dbReference type="CTD" id="259308"/>
<dbReference type="DisGeNET" id="259308"/>
<dbReference type="GeneCards" id="SPATA31F1"/>
<dbReference type="HGNC" id="HGNC:41911">
    <property type="gene designation" value="SPATA31F1"/>
</dbReference>
<dbReference type="HPA" id="ENSG00000205108">
    <property type="expression patterns" value="Tissue enriched (testis)"/>
</dbReference>
<dbReference type="neXtProt" id="NX_Q6ZU69"/>
<dbReference type="OpenTargets" id="ENSG00000205108"/>
<dbReference type="VEuPathDB" id="HostDB:ENSG00000205108"/>
<dbReference type="eggNOG" id="ENOG502SM6T">
    <property type="taxonomic scope" value="Eukaryota"/>
</dbReference>
<dbReference type="GeneTree" id="ENSGT00950000183043"/>
<dbReference type="HOGENOM" id="CLU_007854_0_1_1"/>
<dbReference type="InParanoid" id="Q6ZU69"/>
<dbReference type="OMA" id="CRCHQKV"/>
<dbReference type="OrthoDB" id="10576at9604"/>
<dbReference type="PAN-GO" id="Q6ZU69">
    <property type="GO annotations" value="0 GO annotations based on evolutionary models"/>
</dbReference>
<dbReference type="PhylomeDB" id="Q6ZU69"/>
<dbReference type="TreeFam" id="TF339420"/>
<dbReference type="PathwayCommons" id="Q6ZU69"/>
<dbReference type="BioGRID-ORCS" id="259308">
    <property type="hits" value="11 hits in 1137 CRISPR screens"/>
</dbReference>
<dbReference type="GenomeRNAi" id="259308"/>
<dbReference type="Pharos" id="Q6ZU69">
    <property type="development level" value="Tdark"/>
</dbReference>
<dbReference type="PRO" id="PR:Q6ZU69"/>
<dbReference type="Proteomes" id="UP000005640">
    <property type="component" value="Chromosome 9"/>
</dbReference>
<dbReference type="RNAct" id="Q6ZU69">
    <property type="molecule type" value="protein"/>
</dbReference>
<dbReference type="Bgee" id="ENSG00000205108">
    <property type="expression patterns" value="Expressed in left testis and 24 other cell types or tissues"/>
</dbReference>
<dbReference type="GO" id="GO:0016020">
    <property type="term" value="C:membrane"/>
    <property type="evidence" value="ECO:0007669"/>
    <property type="project" value="UniProtKB-SubCell"/>
</dbReference>
<dbReference type="GO" id="GO:0005634">
    <property type="term" value="C:nucleus"/>
    <property type="evidence" value="ECO:0007005"/>
    <property type="project" value="UniProtKB"/>
</dbReference>
<dbReference type="InterPro" id="IPR039509">
    <property type="entry name" value="SPATA31"/>
</dbReference>
<dbReference type="InterPro" id="IPR027970">
    <property type="entry name" value="SPATA31F3-like"/>
</dbReference>
<dbReference type="PANTHER" id="PTHR21859">
    <property type="entry name" value="ACROSOME-SPECIFIC PROTEIN"/>
    <property type="match status" value="1"/>
</dbReference>
<dbReference type="PANTHER" id="PTHR21859:SF15">
    <property type="entry name" value="PROTEIN SPATA31F1-RELATED"/>
    <property type="match status" value="1"/>
</dbReference>
<dbReference type="Pfam" id="PF15371">
    <property type="entry name" value="DUF4599"/>
    <property type="match status" value="1"/>
</dbReference>
<dbReference type="Pfam" id="PF14650">
    <property type="entry name" value="FAM75"/>
    <property type="match status" value="2"/>
</dbReference>
<evidence type="ECO:0000255" key="1"/>
<evidence type="ECO:0000256" key="2">
    <source>
        <dbReference type="SAM" id="MobiDB-lite"/>
    </source>
</evidence>
<evidence type="ECO:0000305" key="3"/>
<evidence type="ECO:0000312" key="4">
    <source>
        <dbReference type="HGNC" id="HGNC:41911"/>
    </source>
</evidence>
<feature type="chain" id="PRO_0000308581" description="Protein SPATA31F1">
    <location>
        <begin position="1"/>
        <end position="1335"/>
    </location>
</feature>
<feature type="transmembrane region" description="Helical" evidence="1">
    <location>
        <begin position="8"/>
        <end position="28"/>
    </location>
</feature>
<feature type="region of interest" description="Disordered" evidence="2">
    <location>
        <begin position="403"/>
        <end position="424"/>
    </location>
</feature>
<feature type="region of interest" description="Disordered" evidence="2">
    <location>
        <begin position="480"/>
        <end position="502"/>
    </location>
</feature>
<feature type="region of interest" description="Disordered" evidence="2">
    <location>
        <begin position="972"/>
        <end position="1002"/>
    </location>
</feature>
<feature type="region of interest" description="Disordered" evidence="2">
    <location>
        <begin position="1019"/>
        <end position="1141"/>
    </location>
</feature>
<feature type="region of interest" description="Disordered" evidence="2">
    <location>
        <begin position="1248"/>
        <end position="1335"/>
    </location>
</feature>
<feature type="compositionally biased region" description="Polar residues" evidence="2">
    <location>
        <begin position="414"/>
        <end position="424"/>
    </location>
</feature>
<feature type="compositionally biased region" description="Polar residues" evidence="2">
    <location>
        <begin position="972"/>
        <end position="1000"/>
    </location>
</feature>
<feature type="compositionally biased region" description="Basic and acidic residues" evidence="2">
    <location>
        <begin position="1047"/>
        <end position="1064"/>
    </location>
</feature>
<feature type="compositionally biased region" description="Basic and acidic residues" evidence="2">
    <location>
        <begin position="1071"/>
        <end position="1083"/>
    </location>
</feature>
<feature type="compositionally biased region" description="Basic and acidic residues" evidence="2">
    <location>
        <begin position="1129"/>
        <end position="1139"/>
    </location>
</feature>
<feature type="sequence conflict" description="In Ref. 1; BAC86357." evidence="3" ref="1">
    <original>P</original>
    <variation>S</variation>
    <location>
        <position position="345"/>
    </location>
</feature>
<feature type="sequence conflict" description="In Ref. 1; BAC86357." evidence="3" ref="1">
    <original>F</original>
    <variation>S</variation>
    <location>
        <position position="352"/>
    </location>
</feature>
<feature type="sequence conflict" description="In Ref. 1; BAC86357." evidence="3" ref="1">
    <original>M</original>
    <variation>V</variation>
    <location>
        <position position="499"/>
    </location>
</feature>
<feature type="sequence conflict" description="In Ref. 1; BAC86357." evidence="3" ref="1">
    <original>L</original>
    <variation>S</variation>
    <location>
        <position position="600"/>
    </location>
</feature>
<feature type="sequence conflict" description="In Ref. 1; BAC86357." evidence="3" ref="1">
    <original>R</original>
    <variation>H</variation>
    <location>
        <position position="602"/>
    </location>
</feature>
<feature type="sequence conflict" description="In Ref. 1; BAC86357." evidence="3" ref="1">
    <original>E</original>
    <variation>V</variation>
    <location>
        <position position="814"/>
    </location>
</feature>
<feature type="sequence conflict" description="In Ref. 1; BAC86357." evidence="3" ref="1">
    <original>S</original>
    <variation>I</variation>
    <location>
        <position position="999"/>
    </location>
</feature>
<feature type="sequence conflict" description="In Ref. 1; BAC86357." evidence="3" ref="1">
    <original>G</original>
    <variation>E</variation>
    <location>
        <position position="1046"/>
    </location>
</feature>
<feature type="sequence conflict" description="In Ref. 1; BAC86357." evidence="3" ref="1">
    <original>H</original>
    <variation>Y</variation>
    <location>
        <position position="1060"/>
    </location>
</feature>
<feature type="sequence conflict" description="In Ref. 1; BAC86357." evidence="3" ref="1">
    <original>R</original>
    <variation>H</variation>
    <location>
        <position position="1101"/>
    </location>
</feature>
<feature type="sequence conflict" description="In Ref. 1; BAC86357." evidence="3" ref="1">
    <original>A</original>
    <variation>S</variation>
    <location>
        <position position="1165"/>
    </location>
</feature>
<name>S31F1_HUMAN</name>
<sequence>MLSPTFVLWEVGYPLYIYGSIFIVIVIIWQVKRSHHELSSEPKRSCCRCHQKVRQRARDAASTARRRSREEAEKPQKLLSIIKSQGWLPLERSVRRILCADPCCQICNSVALEIQQLLVGENNQISLTLSGPLQGSSCLEMLSTSSMSLDQSLEFHSWHTRELSLSSVTPTLSQLTDQKSLTQSAAQSTYADGIQDYWADHLQLGQEFQVPDVLRGPNTIASSRIEKPRAPLNQEEMTQSNPSLVQGNQGQHHLNSQVSLLSLNPETLNRMHPMALHMVLPAHLPFLSPEVLRLLEVHVKKWMHFQRWGLPRRVEESLRQLMPNPPLYYQPGNDQPVSFNLKNTPQVSLHRFETISLQTWCSCVAGQPIQTFWVSEWSTMNPEQRHHCQQTPNPMALALPSPALKALSGPHPQSGGQDNDSGSDLQQKYSQLFCGLPSLHSESLVATFMGSQGLPKIENVPKPPLKDPFLFNELSFPQLLPKTSPQSAPPSSPLSPNWMSPSDHQRAQINVPFLTLAEYEALEWHLLQRQLQLQWGWPAALQRSQHTQCLMQHEPCGKAQSPETTTASQTGKSISVLTRELLFFPEHARKLLEFHIQKQLIRHRWGLPQKIQQSIQLLLTSTDQQTVSSSSTALANVSIPQPVALEANGACDVLSPIAAPVSIPRPHLLTQVKAILQSHIDSKCGQIHQGKIPACVHRSWDCRISGVLAVAPFPCIPESQFLELQTASDPDLHHKVMPWMPTALDQQQQALPGTVTEHPKLLRVLSVEAIEKLETTLRHKHLAFLSGLPALYYVALPRALAPAVTSQSVITEMEPSPVEIPAEPLIQMVSFEEQCISLGPCPQGNNESCTDVAKEFQPAVPVKGTMETLPLESQTHPTSPHSLQTHILTKLNFHLRKKVLEIQWGIPIRARKSREQTVAAPENISTQKSLESLNHQGETLLQELPIPPDTLPAPNPEGVHLKEQLANDLKAVQQNQKQSNSKAVPQGSAHSVSKISQPSGDMTEAHMPCVQVEANVNKPSLEEPCGPEPQSPSKSKDPAHVPMLAGNREDPEETKAARDHREGDAGFGRSSTREERRPAEDQRPAGMLPNKTPRGSWRWSRSFHLADPCQHSPQHHPQLKLPQLPPRVPGEKESEKDLQDSQTKLTVILEPATIPENAQTVLPQASQGQPFLSQPTQAKPLQGQTLQGQVLHGLVMPVHAQKKPSLTESSFRNKIKCFLQHINPKTKGKGHEDSMFSAAAKVAKTRKENVAKSLAPAKSPVGRSKTEKPTGCSKAQSRPAQKLVGPAFLDGPQSLDDKLRLHSRQPGSASALGYPRHCPRHCPREACANKPGHPT</sequence>
<gene>
    <name evidence="4" type="primary">SPATA31F1</name>
    <name type="synonym">C9orf144B</name>
    <name type="synonym">FAM205A</name>
</gene>
<keyword id="KW-0472">Membrane</keyword>
<keyword id="KW-1267">Proteomics identification</keyword>
<keyword id="KW-1185">Reference proteome</keyword>
<keyword id="KW-0812">Transmembrane</keyword>
<keyword id="KW-1133">Transmembrane helix</keyword>
<organism>
    <name type="scientific">Homo sapiens</name>
    <name type="common">Human</name>
    <dbReference type="NCBI Taxonomy" id="9606"/>
    <lineage>
        <taxon>Eukaryota</taxon>
        <taxon>Metazoa</taxon>
        <taxon>Chordata</taxon>
        <taxon>Craniata</taxon>
        <taxon>Vertebrata</taxon>
        <taxon>Euteleostomi</taxon>
        <taxon>Mammalia</taxon>
        <taxon>Eutheria</taxon>
        <taxon>Euarchontoglires</taxon>
        <taxon>Primates</taxon>
        <taxon>Haplorrhini</taxon>
        <taxon>Catarrhini</taxon>
        <taxon>Hominidae</taxon>
        <taxon>Homo</taxon>
    </lineage>
</organism>
<proteinExistence type="evidence at protein level"/>